<keyword id="KW-0963">Cytoplasm</keyword>
<keyword id="KW-0539">Nucleus</keyword>
<keyword id="KW-1185">Reference proteome</keyword>
<keyword id="KW-0819">tRNA processing</keyword>
<organism>
    <name type="scientific">Schizosaccharomyces pombe (strain 972 / ATCC 24843)</name>
    <name type="common">Fission yeast</name>
    <dbReference type="NCBI Taxonomy" id="284812"/>
    <lineage>
        <taxon>Eukaryota</taxon>
        <taxon>Fungi</taxon>
        <taxon>Dikarya</taxon>
        <taxon>Ascomycota</taxon>
        <taxon>Taphrinomycotina</taxon>
        <taxon>Schizosaccharomycetes</taxon>
        <taxon>Schizosaccharomycetales</taxon>
        <taxon>Schizosaccharomycetaceae</taxon>
        <taxon>Schizosaccharomyces</taxon>
    </lineage>
</organism>
<proteinExistence type="evidence at protein level"/>
<evidence type="ECO:0000255" key="1">
    <source>
        <dbReference type="HAMAP-Rule" id="MF_03054"/>
    </source>
</evidence>
<evidence type="ECO:0000269" key="2">
    <source>
    </source>
</evidence>
<evidence type="ECO:0000269" key="3">
    <source>
    </source>
</evidence>
<protein>
    <recommendedName>
        <fullName evidence="1">Cytoplasmic tRNA 2-thiolation protein 2</fullName>
    </recommendedName>
</protein>
<reference key="1">
    <citation type="journal article" date="2002" name="Nature">
        <title>The genome sequence of Schizosaccharomyces pombe.</title>
        <authorList>
            <person name="Wood V."/>
            <person name="Gwilliam R."/>
            <person name="Rajandream M.A."/>
            <person name="Lyne M.H."/>
            <person name="Lyne R."/>
            <person name="Stewart A."/>
            <person name="Sgouros J.G."/>
            <person name="Peat N."/>
            <person name="Hayles J."/>
            <person name="Baker S.G."/>
            <person name="Basham D."/>
            <person name="Bowman S."/>
            <person name="Brooks K."/>
            <person name="Brown D."/>
            <person name="Brown S."/>
            <person name="Chillingworth T."/>
            <person name="Churcher C.M."/>
            <person name="Collins M."/>
            <person name="Connor R."/>
            <person name="Cronin A."/>
            <person name="Davis P."/>
            <person name="Feltwell T."/>
            <person name="Fraser A."/>
            <person name="Gentles S."/>
            <person name="Goble A."/>
            <person name="Hamlin N."/>
            <person name="Harris D.E."/>
            <person name="Hidalgo J."/>
            <person name="Hodgson G."/>
            <person name="Holroyd S."/>
            <person name="Hornsby T."/>
            <person name="Howarth S."/>
            <person name="Huckle E.J."/>
            <person name="Hunt S."/>
            <person name="Jagels K."/>
            <person name="James K.D."/>
            <person name="Jones L."/>
            <person name="Jones M."/>
            <person name="Leather S."/>
            <person name="McDonald S."/>
            <person name="McLean J."/>
            <person name="Mooney P."/>
            <person name="Moule S."/>
            <person name="Mungall K.L."/>
            <person name="Murphy L.D."/>
            <person name="Niblett D."/>
            <person name="Odell C."/>
            <person name="Oliver K."/>
            <person name="O'Neil S."/>
            <person name="Pearson D."/>
            <person name="Quail M.A."/>
            <person name="Rabbinowitsch E."/>
            <person name="Rutherford K.M."/>
            <person name="Rutter S."/>
            <person name="Saunders D."/>
            <person name="Seeger K."/>
            <person name="Sharp S."/>
            <person name="Skelton J."/>
            <person name="Simmonds M.N."/>
            <person name="Squares R."/>
            <person name="Squares S."/>
            <person name="Stevens K."/>
            <person name="Taylor K."/>
            <person name="Taylor R.G."/>
            <person name="Tivey A."/>
            <person name="Walsh S.V."/>
            <person name="Warren T."/>
            <person name="Whitehead S."/>
            <person name="Woodward J.R."/>
            <person name="Volckaert G."/>
            <person name="Aert R."/>
            <person name="Robben J."/>
            <person name="Grymonprez B."/>
            <person name="Weltjens I."/>
            <person name="Vanstreels E."/>
            <person name="Rieger M."/>
            <person name="Schaefer M."/>
            <person name="Mueller-Auer S."/>
            <person name="Gabel C."/>
            <person name="Fuchs M."/>
            <person name="Duesterhoeft A."/>
            <person name="Fritzc C."/>
            <person name="Holzer E."/>
            <person name="Moestl D."/>
            <person name="Hilbert H."/>
            <person name="Borzym K."/>
            <person name="Langer I."/>
            <person name="Beck A."/>
            <person name="Lehrach H."/>
            <person name="Reinhardt R."/>
            <person name="Pohl T.M."/>
            <person name="Eger P."/>
            <person name="Zimmermann W."/>
            <person name="Wedler H."/>
            <person name="Wambutt R."/>
            <person name="Purnelle B."/>
            <person name="Goffeau A."/>
            <person name="Cadieu E."/>
            <person name="Dreano S."/>
            <person name="Gloux S."/>
            <person name="Lelaure V."/>
            <person name="Mottier S."/>
            <person name="Galibert F."/>
            <person name="Aves S.J."/>
            <person name="Xiang Z."/>
            <person name="Hunt C."/>
            <person name="Moore K."/>
            <person name="Hurst S.M."/>
            <person name="Lucas M."/>
            <person name="Rochet M."/>
            <person name="Gaillardin C."/>
            <person name="Tallada V.A."/>
            <person name="Garzon A."/>
            <person name="Thode G."/>
            <person name="Daga R.R."/>
            <person name="Cruzado L."/>
            <person name="Jimenez J."/>
            <person name="Sanchez M."/>
            <person name="del Rey F."/>
            <person name="Benito J."/>
            <person name="Dominguez A."/>
            <person name="Revuelta J.L."/>
            <person name="Moreno S."/>
            <person name="Armstrong J."/>
            <person name="Forsburg S.L."/>
            <person name="Cerutti L."/>
            <person name="Lowe T."/>
            <person name="McCombie W.R."/>
            <person name="Paulsen I."/>
            <person name="Potashkin J."/>
            <person name="Shpakovski G.V."/>
            <person name="Ussery D."/>
            <person name="Barrell B.G."/>
            <person name="Nurse P."/>
        </authorList>
    </citation>
    <scope>NUCLEOTIDE SEQUENCE [LARGE SCALE GENOMIC DNA]</scope>
    <source>
        <strain>972 / ATCC 24843</strain>
    </source>
</reference>
<reference key="2">
    <citation type="journal article" date="2006" name="Nat. Biotechnol.">
        <title>ORFeome cloning and global analysis of protein localization in the fission yeast Schizosaccharomyces pombe.</title>
        <authorList>
            <person name="Matsuyama A."/>
            <person name="Arai R."/>
            <person name="Yashiroda Y."/>
            <person name="Shirai A."/>
            <person name="Kamata A."/>
            <person name="Sekido S."/>
            <person name="Kobayashi Y."/>
            <person name="Hashimoto A."/>
            <person name="Hamamoto M."/>
            <person name="Hiraoka Y."/>
            <person name="Horinouchi S."/>
            <person name="Yoshida M."/>
        </authorList>
    </citation>
    <scope>SUBCELLULAR LOCATION [LARGE SCALE ANALYSIS]</scope>
</reference>
<reference key="3">
    <citation type="journal article" date="2008" name="Proc. Natl. Acad. Sci. U.S.A.">
        <title>The conserved wobble uridine tRNA thiolase Ctu1-Ctu2 is required to maintain genome integrity.</title>
        <authorList>
            <person name="Dewez M."/>
            <person name="Bauer F."/>
            <person name="Dieu M."/>
            <person name="Raes M."/>
            <person name="Vandenhaute J."/>
            <person name="Hermand D."/>
        </authorList>
    </citation>
    <scope>FUNCTION</scope>
    <scope>INTERACTION WITH CTU1</scope>
</reference>
<name>CTU2_SCHPO</name>
<comment type="function">
    <text evidence="1 3">Plays a central role in 2-thiolation of mcm(5)S(2)U at tRNA wobble positions of tRNA(Lys), tRNA(Glu) and tRNA(Gln). May act by forming a heterodimer with ctu1 that ligates sulfur from thiocarboxylated urm1 onto the uridine of tRNAs at wobble position. Prior mcm(5) tRNA modification by the elongator complex is required for 2-thiolation. May also be involved in protein urmylation.</text>
</comment>
<comment type="pathway">
    <text evidence="1">tRNA modification; 5-methoxycarbonylmethyl-2-thiouridine-tRNA biosynthesis.</text>
</comment>
<comment type="subunit">
    <text evidence="3">Interacts with ctu1.</text>
</comment>
<comment type="subcellular location">
    <subcellularLocation>
        <location evidence="1 2">Cytoplasm</location>
    </subcellularLocation>
    <subcellularLocation>
        <location evidence="2">Nucleus</location>
    </subcellularLocation>
</comment>
<comment type="similarity">
    <text evidence="1">Belongs to the CTU2/NCS2 family.</text>
</comment>
<sequence length="366" mass="40742">MQNTALDNSADSKCSKCDNKATVLTKSDAVCDSCFVRRIENKIRRQFELVRPNLQGRKSKRAMLAISGGISSMAMLETANYLSKYRDDNYRPMFDELLAVHFQWGTDSAVAKTIEESISKNYPKCPFKVIGEAELLNRTIATDSRGNIEINADNEKFNPEVISSLASRQDLLYRIRDKLLVSYARKANCDTIVFGDSGTTIAARVLELVAEGRGFAIPWYTSVCSKLPNCDTFLLRPLREVLSSDLKSYMNIKGLAFCDSLIEARPNTIHGVTESYFSSLNDTFPSLVSTVVKMSSKLHVPSTEAICTICNLPMQEDAETWLQKTTVEHPDSVEGIKNQNVCYGCSVSLKSLKGTLHIPDIEKEGI</sequence>
<dbReference type="EMBL" id="CU329671">
    <property type="protein sequence ID" value="CAB52040.1"/>
    <property type="molecule type" value="Genomic_DNA"/>
</dbReference>
<dbReference type="PIR" id="T39804">
    <property type="entry name" value="T39804"/>
</dbReference>
<dbReference type="RefSeq" id="NP_595698.1">
    <property type="nucleotide sequence ID" value="NM_001021595.2"/>
</dbReference>
<dbReference type="SMR" id="Q9UUC7"/>
<dbReference type="BioGRID" id="277412">
    <property type="interactions" value="26"/>
</dbReference>
<dbReference type="ComplexPortal" id="CPX-25770">
    <property type="entry name" value="Cytosolic tRNA wobble base thiouridylase complex"/>
</dbReference>
<dbReference type="DIP" id="DIP-29901N"/>
<dbReference type="FunCoup" id="Q9UUC7">
    <property type="interactions" value="331"/>
</dbReference>
<dbReference type="IntAct" id="Q9UUC7">
    <property type="interactions" value="1"/>
</dbReference>
<dbReference type="STRING" id="284812.Q9UUC7"/>
<dbReference type="iPTMnet" id="Q9UUC7"/>
<dbReference type="PaxDb" id="4896-SPBC19C2.13c.1"/>
<dbReference type="EnsemblFungi" id="SPBC19C2.13c.1">
    <property type="protein sequence ID" value="SPBC19C2.13c.1:pep"/>
    <property type="gene ID" value="SPBC19C2.13c"/>
</dbReference>
<dbReference type="GeneID" id="2540896"/>
<dbReference type="KEGG" id="spo:2540896"/>
<dbReference type="PomBase" id="SPBC19C2.13c">
    <property type="gene designation" value="ctu2"/>
</dbReference>
<dbReference type="VEuPathDB" id="FungiDB:SPBC19C2.13c"/>
<dbReference type="eggNOG" id="KOG2594">
    <property type="taxonomic scope" value="Eukaryota"/>
</dbReference>
<dbReference type="HOGENOM" id="CLU_024534_3_0_1"/>
<dbReference type="InParanoid" id="Q9UUC7"/>
<dbReference type="OMA" id="KQRKQMM"/>
<dbReference type="PhylomeDB" id="Q9UUC7"/>
<dbReference type="UniPathway" id="UPA00988"/>
<dbReference type="PRO" id="PR:Q9UUC7"/>
<dbReference type="Proteomes" id="UP000002485">
    <property type="component" value="Chromosome II"/>
</dbReference>
<dbReference type="GO" id="GO:0005829">
    <property type="term" value="C:cytosol"/>
    <property type="evidence" value="ECO:0000318"/>
    <property type="project" value="GO_Central"/>
</dbReference>
<dbReference type="GO" id="GO:0002144">
    <property type="term" value="C:cytosolic tRNA wobble base thiouridylase complex"/>
    <property type="evidence" value="ECO:0000353"/>
    <property type="project" value="PomBase"/>
</dbReference>
<dbReference type="GO" id="GO:0005634">
    <property type="term" value="C:nucleus"/>
    <property type="evidence" value="ECO:0007005"/>
    <property type="project" value="PomBase"/>
</dbReference>
<dbReference type="GO" id="GO:0016779">
    <property type="term" value="F:nucleotidyltransferase activity"/>
    <property type="evidence" value="ECO:0007669"/>
    <property type="project" value="UniProtKB-UniRule"/>
</dbReference>
<dbReference type="GO" id="GO:0016783">
    <property type="term" value="F:sulfurtransferase activity"/>
    <property type="evidence" value="ECO:0000318"/>
    <property type="project" value="GO_Central"/>
</dbReference>
<dbReference type="GO" id="GO:0000049">
    <property type="term" value="F:tRNA binding"/>
    <property type="evidence" value="ECO:0007669"/>
    <property type="project" value="InterPro"/>
</dbReference>
<dbReference type="GO" id="GO:0032447">
    <property type="term" value="P:protein urmylation"/>
    <property type="evidence" value="ECO:0007669"/>
    <property type="project" value="UniProtKB-UniRule"/>
</dbReference>
<dbReference type="GO" id="GO:0002143">
    <property type="term" value="P:tRNA wobble position uridine thiolation"/>
    <property type="evidence" value="ECO:0000314"/>
    <property type="project" value="PomBase"/>
</dbReference>
<dbReference type="Gene3D" id="3.40.50.620">
    <property type="entry name" value="HUPs"/>
    <property type="match status" value="1"/>
</dbReference>
<dbReference type="HAMAP" id="MF_03054">
    <property type="entry name" value="CTU2"/>
    <property type="match status" value="1"/>
</dbReference>
<dbReference type="InterPro" id="IPR019407">
    <property type="entry name" value="CTU2"/>
</dbReference>
<dbReference type="InterPro" id="IPR014729">
    <property type="entry name" value="Rossmann-like_a/b/a_fold"/>
</dbReference>
<dbReference type="PANTHER" id="PTHR20882">
    <property type="entry name" value="CYTOPLASMIC TRNA 2-THIOLATION PROTEIN 2"/>
    <property type="match status" value="1"/>
</dbReference>
<dbReference type="PANTHER" id="PTHR20882:SF14">
    <property type="entry name" value="CYTOPLASMIC TRNA 2-THIOLATION PROTEIN 2"/>
    <property type="match status" value="1"/>
</dbReference>
<dbReference type="Pfam" id="PF10288">
    <property type="entry name" value="CTU2"/>
    <property type="match status" value="1"/>
</dbReference>
<dbReference type="SUPFAM" id="SSF52402">
    <property type="entry name" value="Adenine nucleotide alpha hydrolases-like"/>
    <property type="match status" value="1"/>
</dbReference>
<accession>Q9UUC7</accession>
<feature type="chain" id="PRO_0000359408" description="Cytoplasmic tRNA 2-thiolation protein 2">
    <location>
        <begin position="1"/>
        <end position="366"/>
    </location>
</feature>
<gene>
    <name type="primary">ctu2</name>
    <name type="synonym">ncs2</name>
    <name type="ORF">SPBC19C2.13c</name>
</gene>